<name>LEG2_APLLA</name>
<comment type="function">
    <text evidence="1">Lectin that binds beta-galactoside and a wide array of complex carbohydrates.</text>
</comment>
<comment type="mass spectrometry"/>
<proteinExistence type="evidence at protein level"/>
<organism>
    <name type="scientific">Aplysina lactuca</name>
    <name type="common">Marine sponge</name>
    <dbReference type="NCBI Taxonomy" id="2911866"/>
    <lineage>
        <taxon>Eukaryota</taxon>
        <taxon>Metazoa</taxon>
        <taxon>Porifera</taxon>
        <taxon>Demospongiae</taxon>
        <taxon>Verongimorpha</taxon>
        <taxon>Verongiida</taxon>
        <taxon>Aplysinidae</taxon>
        <taxon>Aplysina</taxon>
    </lineage>
</organism>
<accession>C0HM20</accession>
<feature type="chain" id="PRO_0000457094" description="Galectin b">
    <location>
        <begin position="1"/>
        <end position="144"/>
    </location>
</feature>
<feature type="domain" description="Galectin" evidence="2">
    <location>
        <begin position="1"/>
        <end position="138"/>
    </location>
</feature>
<keyword id="KW-0903">Direct protein sequencing</keyword>
<keyword id="KW-0430">Lectin</keyword>
<sequence>DHIDLEFDVGQCIQASYTAPTTGRTSVNIVASDGTVVLHVDYRKHWGGNPSTGKPWQNILIINSKLGGSWGTEEKVHDVETTIVNYDYTQCGQDADFSLELNQKDIATYAYRSPVNTVSRVQFDDQGYDAVLRKLCVVYPAPSK</sequence>
<protein>
    <recommendedName>
        <fullName evidence="5">Galectin b</fullName>
        <shortName evidence="5">Gal-b</shortName>
    </recommendedName>
    <alternativeName>
        <fullName evidence="4">Aplysina lactuca lectin b</fullName>
        <shortName evidence="4">ALL-b</shortName>
    </alternativeName>
    <alternativeName>
        <fullName evidence="5">Beta-galactoside-binding lectin b</fullName>
    </alternativeName>
</protein>
<dbReference type="SMR" id="C0HM20"/>
<dbReference type="GO" id="GO:0030246">
    <property type="term" value="F:carbohydrate binding"/>
    <property type="evidence" value="ECO:0007669"/>
    <property type="project" value="UniProtKB-KW"/>
</dbReference>
<dbReference type="Gene3D" id="2.60.120.200">
    <property type="match status" value="1"/>
</dbReference>
<dbReference type="InterPro" id="IPR013320">
    <property type="entry name" value="ConA-like_dom_sf"/>
</dbReference>
<dbReference type="InterPro" id="IPR001079">
    <property type="entry name" value="Galectin_CRD"/>
</dbReference>
<dbReference type="Pfam" id="PF00337">
    <property type="entry name" value="Gal-bind_lectin"/>
    <property type="match status" value="1"/>
</dbReference>
<dbReference type="SUPFAM" id="SSF49899">
    <property type="entry name" value="Concanavalin A-like lectins/glucanases"/>
    <property type="match status" value="1"/>
</dbReference>
<dbReference type="PROSITE" id="PS51304">
    <property type="entry name" value="GALECTIN"/>
    <property type="match status" value="1"/>
</dbReference>
<evidence type="ECO:0000250" key="1">
    <source>
        <dbReference type="UniProtKB" id="P09382"/>
    </source>
</evidence>
<evidence type="ECO:0000255" key="2">
    <source>
        <dbReference type="PROSITE-ProRule" id="PRU00639"/>
    </source>
</evidence>
<evidence type="ECO:0000269" key="3">
    <source ref="1"/>
</evidence>
<evidence type="ECO:0000303" key="4">
    <source ref="1"/>
</evidence>
<evidence type="ECO:0000305" key="5"/>
<reference evidence="5" key="1">
    <citation type="submission" date="2022-01" db="UniProtKB">
        <title>Amino acid sequence of ALL, a galectin from marine sponge Aplysina lactuca.</title>
        <authorList>
            <person name="de Assis Duarte J."/>
            <person name="Farias Cerneiro R."/>
            <person name="Holanda Sampaio A."/>
            <person name="Shiniti Nagano C."/>
        </authorList>
    </citation>
    <scope>PROTEIN SEQUENCE</scope>
    <scope>MASS SPECTROMETRY</scope>
</reference>